<proteinExistence type="inferred from homology"/>
<keyword id="KW-0150">Chloroplast</keyword>
<keyword id="KW-0472">Membrane</keyword>
<keyword id="KW-0520">NAD</keyword>
<keyword id="KW-0521">NADP</keyword>
<keyword id="KW-0934">Plastid</keyword>
<keyword id="KW-0618">Plastoquinone</keyword>
<keyword id="KW-0874">Quinone</keyword>
<keyword id="KW-0793">Thylakoid</keyword>
<keyword id="KW-1278">Translocase</keyword>
<keyword id="KW-0812">Transmembrane</keyword>
<keyword id="KW-1133">Transmembrane helix</keyword>
<keyword id="KW-0813">Transport</keyword>
<dbReference type="EC" id="7.1.1.-" evidence="1"/>
<dbReference type="EMBL" id="AP009339">
    <property type="protein sequence ID" value="BAF64945.1"/>
    <property type="molecule type" value="Genomic_DNA"/>
</dbReference>
<dbReference type="RefSeq" id="YP_001312204.1">
    <property type="nucleotide sequence ID" value="NC_009618.1"/>
</dbReference>
<dbReference type="SMR" id="A6H5H9"/>
<dbReference type="GeneID" id="5309530"/>
<dbReference type="GO" id="GO:0009535">
    <property type="term" value="C:chloroplast thylakoid membrane"/>
    <property type="evidence" value="ECO:0007669"/>
    <property type="project" value="UniProtKB-SubCell"/>
</dbReference>
<dbReference type="GO" id="GO:0030964">
    <property type="term" value="C:NADH dehydrogenase complex"/>
    <property type="evidence" value="ECO:0007669"/>
    <property type="project" value="TreeGrafter"/>
</dbReference>
<dbReference type="GO" id="GO:0008137">
    <property type="term" value="F:NADH dehydrogenase (ubiquinone) activity"/>
    <property type="evidence" value="ECO:0007669"/>
    <property type="project" value="InterPro"/>
</dbReference>
<dbReference type="GO" id="GO:0048038">
    <property type="term" value="F:quinone binding"/>
    <property type="evidence" value="ECO:0007669"/>
    <property type="project" value="UniProtKB-KW"/>
</dbReference>
<dbReference type="GO" id="GO:0019684">
    <property type="term" value="P:photosynthesis, light reaction"/>
    <property type="evidence" value="ECO:0007669"/>
    <property type="project" value="UniProtKB-UniRule"/>
</dbReference>
<dbReference type="FunFam" id="1.20.58.1610:FF:000001">
    <property type="entry name" value="NAD(P)H-quinone oxidoreductase subunit 3, chloroplastic"/>
    <property type="match status" value="1"/>
</dbReference>
<dbReference type="Gene3D" id="1.20.58.1610">
    <property type="entry name" value="NADH:ubiquinone/plastoquinone oxidoreductase, chain 3"/>
    <property type="match status" value="1"/>
</dbReference>
<dbReference type="HAMAP" id="MF_01394">
    <property type="entry name" value="NDH1_NuoA"/>
    <property type="match status" value="1"/>
</dbReference>
<dbReference type="InterPro" id="IPR023043">
    <property type="entry name" value="NAD(P)H_OxRDtase_bac/plastid"/>
</dbReference>
<dbReference type="InterPro" id="IPR000440">
    <property type="entry name" value="NADH_UbQ/plastoQ_OxRdtase_su3"/>
</dbReference>
<dbReference type="InterPro" id="IPR038430">
    <property type="entry name" value="NDAH_ubi_oxred_su3_sf"/>
</dbReference>
<dbReference type="PANTHER" id="PTHR11058">
    <property type="entry name" value="NADH-UBIQUINONE OXIDOREDUCTASE CHAIN 3"/>
    <property type="match status" value="1"/>
</dbReference>
<dbReference type="PANTHER" id="PTHR11058:SF9">
    <property type="entry name" value="NADH-UBIQUINONE OXIDOREDUCTASE CHAIN 3"/>
    <property type="match status" value="1"/>
</dbReference>
<dbReference type="Pfam" id="PF00507">
    <property type="entry name" value="Oxidored_q4"/>
    <property type="match status" value="1"/>
</dbReference>
<gene>
    <name evidence="1" type="primary">ndhC</name>
</gene>
<comment type="function">
    <text evidence="1">NDH shuttles electrons from NAD(P)H:plastoquinone, via FMN and iron-sulfur (Fe-S) centers, to quinones in the photosynthetic chain and possibly in a chloroplast respiratory chain. The immediate electron acceptor for the enzyme in this species is believed to be plastoquinone. Couples the redox reaction to proton translocation, and thus conserves the redox energy in a proton gradient.</text>
</comment>
<comment type="catalytic activity">
    <reaction evidence="1">
        <text>a plastoquinone + NADH + (n+1) H(+)(in) = a plastoquinol + NAD(+) + n H(+)(out)</text>
        <dbReference type="Rhea" id="RHEA:42608"/>
        <dbReference type="Rhea" id="RHEA-COMP:9561"/>
        <dbReference type="Rhea" id="RHEA-COMP:9562"/>
        <dbReference type="ChEBI" id="CHEBI:15378"/>
        <dbReference type="ChEBI" id="CHEBI:17757"/>
        <dbReference type="ChEBI" id="CHEBI:57540"/>
        <dbReference type="ChEBI" id="CHEBI:57945"/>
        <dbReference type="ChEBI" id="CHEBI:62192"/>
    </reaction>
</comment>
<comment type="catalytic activity">
    <reaction evidence="1">
        <text>a plastoquinone + NADPH + (n+1) H(+)(in) = a plastoquinol + NADP(+) + n H(+)(out)</text>
        <dbReference type="Rhea" id="RHEA:42612"/>
        <dbReference type="Rhea" id="RHEA-COMP:9561"/>
        <dbReference type="Rhea" id="RHEA-COMP:9562"/>
        <dbReference type="ChEBI" id="CHEBI:15378"/>
        <dbReference type="ChEBI" id="CHEBI:17757"/>
        <dbReference type="ChEBI" id="CHEBI:57783"/>
        <dbReference type="ChEBI" id="CHEBI:58349"/>
        <dbReference type="ChEBI" id="CHEBI:62192"/>
    </reaction>
</comment>
<comment type="subunit">
    <text evidence="1">NDH is composed of at least 16 different subunits, 5 of which are encoded in the nucleus.</text>
</comment>
<comment type="subcellular location">
    <subcellularLocation>
        <location evidence="1">Plastid</location>
        <location evidence="1">Chloroplast thylakoid membrane</location>
        <topology evidence="1">Multi-pass membrane protein</topology>
    </subcellularLocation>
</comment>
<comment type="similarity">
    <text evidence="1">Belongs to the complex I subunit 3 family.</text>
</comment>
<geneLocation type="chloroplast"/>
<accession>A6H5H9</accession>
<organism>
    <name type="scientific">Cycas taitungensis</name>
    <name type="common">Prince sago</name>
    <name type="synonym">Cycas taiwaniana</name>
    <dbReference type="NCBI Taxonomy" id="54799"/>
    <lineage>
        <taxon>Eukaryota</taxon>
        <taxon>Viridiplantae</taxon>
        <taxon>Streptophyta</taxon>
        <taxon>Embryophyta</taxon>
        <taxon>Tracheophyta</taxon>
        <taxon>Spermatophyta</taxon>
        <taxon>Cycadidae</taxon>
        <taxon>Cycadales</taxon>
        <taxon>Cycadaceae</taxon>
        <taxon>Cycas</taxon>
    </lineage>
</organism>
<reference key="1">
    <citation type="journal article" date="2007" name="Mol. Biol. Evol.">
        <title>Chloroplast genome (cpDNA) of Cycas taitungensis and 56 cp protein-coding genes of Gnetum parvifolium: insights into cpDNA evolution and phylogeny of extant seed plants.</title>
        <authorList>
            <person name="Wu C.-S."/>
            <person name="Wang Y.-N."/>
            <person name="Liu S.-M."/>
            <person name="Chaw S.-M."/>
        </authorList>
    </citation>
    <scope>NUCLEOTIDE SEQUENCE [LARGE SCALE GENOMIC DNA]</scope>
</reference>
<sequence>MFLLFEYETFWIFLLISSLMPILAFLISRALAPISEGPEKLTSYESGIEAMGDAWIQFRIRYYMFALVFVVFDVETVFLYPWAMSFDILGISTFIEASIFVLILIVGSVHAWRRGALEWS</sequence>
<evidence type="ECO:0000255" key="1">
    <source>
        <dbReference type="HAMAP-Rule" id="MF_01394"/>
    </source>
</evidence>
<name>NU3C_CYCTA</name>
<protein>
    <recommendedName>
        <fullName evidence="1">NAD(P)H-quinone oxidoreductase subunit 3, chloroplastic</fullName>
        <ecNumber evidence="1">7.1.1.-</ecNumber>
    </recommendedName>
    <alternativeName>
        <fullName evidence="1">NAD(P)H dehydrogenase subunit 3</fullName>
    </alternativeName>
    <alternativeName>
        <fullName evidence="1">NADH-plastoquinone oxidoreductase subunit 3</fullName>
    </alternativeName>
</protein>
<feature type="chain" id="PRO_0000362827" description="NAD(P)H-quinone oxidoreductase subunit 3, chloroplastic">
    <location>
        <begin position="1"/>
        <end position="120"/>
    </location>
</feature>
<feature type="transmembrane region" description="Helical" evidence="1">
    <location>
        <begin position="7"/>
        <end position="27"/>
    </location>
</feature>
<feature type="transmembrane region" description="Helical" evidence="1">
    <location>
        <begin position="64"/>
        <end position="84"/>
    </location>
</feature>
<feature type="transmembrane region" description="Helical" evidence="1">
    <location>
        <begin position="88"/>
        <end position="108"/>
    </location>
</feature>